<keyword id="KW-0210">Decarboxylase</keyword>
<keyword id="KW-0456">Lyase</keyword>
<keyword id="KW-0460">Magnesium</keyword>
<keyword id="KW-0479">Metal-binding</keyword>
<keyword id="KW-0620">Polyamine biosynthesis</keyword>
<keyword id="KW-0663">Pyridoxal phosphate</keyword>
<keyword id="KW-0745">Spermidine biosynthesis</keyword>
<proteinExistence type="inferred from homology"/>
<accession>B0U1H6</accession>
<dbReference type="EC" id="4.1.1.19" evidence="1"/>
<dbReference type="EMBL" id="CP000941">
    <property type="protein sequence ID" value="ACA11160.1"/>
    <property type="molecule type" value="Genomic_DNA"/>
</dbReference>
<dbReference type="RefSeq" id="WP_004085515.1">
    <property type="nucleotide sequence ID" value="NC_010513.1"/>
</dbReference>
<dbReference type="SMR" id="B0U1H6"/>
<dbReference type="KEGG" id="xfm:Xfasm12_0121"/>
<dbReference type="HOGENOM" id="CLU_027243_1_0_6"/>
<dbReference type="UniPathway" id="UPA00186">
    <property type="reaction ID" value="UER00284"/>
</dbReference>
<dbReference type="GO" id="GO:0008792">
    <property type="term" value="F:arginine decarboxylase activity"/>
    <property type="evidence" value="ECO:0007669"/>
    <property type="project" value="UniProtKB-UniRule"/>
</dbReference>
<dbReference type="GO" id="GO:0046872">
    <property type="term" value="F:metal ion binding"/>
    <property type="evidence" value="ECO:0007669"/>
    <property type="project" value="UniProtKB-KW"/>
</dbReference>
<dbReference type="GO" id="GO:0006527">
    <property type="term" value="P:arginine catabolic process"/>
    <property type="evidence" value="ECO:0007669"/>
    <property type="project" value="InterPro"/>
</dbReference>
<dbReference type="GO" id="GO:0033388">
    <property type="term" value="P:putrescine biosynthetic process from arginine"/>
    <property type="evidence" value="ECO:0007669"/>
    <property type="project" value="TreeGrafter"/>
</dbReference>
<dbReference type="GO" id="GO:0008295">
    <property type="term" value="P:spermidine biosynthetic process"/>
    <property type="evidence" value="ECO:0007669"/>
    <property type="project" value="UniProtKB-UniRule"/>
</dbReference>
<dbReference type="CDD" id="cd06830">
    <property type="entry name" value="PLPDE_III_ADC"/>
    <property type="match status" value="1"/>
</dbReference>
<dbReference type="FunFam" id="3.20.20.10:FF:000001">
    <property type="entry name" value="Biosynthetic arginine decarboxylase"/>
    <property type="match status" value="1"/>
</dbReference>
<dbReference type="Gene3D" id="1.10.287.3440">
    <property type="match status" value="1"/>
</dbReference>
<dbReference type="Gene3D" id="1.20.58.930">
    <property type="match status" value="1"/>
</dbReference>
<dbReference type="Gene3D" id="3.20.20.10">
    <property type="entry name" value="Alanine racemase"/>
    <property type="match status" value="1"/>
</dbReference>
<dbReference type="Gene3D" id="2.40.37.10">
    <property type="entry name" value="Lyase, Ornithine Decarboxylase, Chain A, domain 1"/>
    <property type="match status" value="1"/>
</dbReference>
<dbReference type="HAMAP" id="MF_01417">
    <property type="entry name" value="SpeA"/>
    <property type="match status" value="1"/>
</dbReference>
<dbReference type="InterPro" id="IPR009006">
    <property type="entry name" value="Ala_racemase/Decarboxylase_C"/>
</dbReference>
<dbReference type="InterPro" id="IPR040634">
    <property type="entry name" value="Arg_decarb_HB"/>
</dbReference>
<dbReference type="InterPro" id="IPR041128">
    <property type="entry name" value="Arg_decarbox_C"/>
</dbReference>
<dbReference type="InterPro" id="IPR002985">
    <property type="entry name" value="Arg_decrbxlase"/>
</dbReference>
<dbReference type="InterPro" id="IPR022657">
    <property type="entry name" value="De-COase2_CS"/>
</dbReference>
<dbReference type="InterPro" id="IPR022644">
    <property type="entry name" value="De-COase2_N"/>
</dbReference>
<dbReference type="InterPro" id="IPR000183">
    <property type="entry name" value="Orn/DAP/Arg_de-COase"/>
</dbReference>
<dbReference type="InterPro" id="IPR029066">
    <property type="entry name" value="PLP-binding_barrel"/>
</dbReference>
<dbReference type="NCBIfam" id="NF003763">
    <property type="entry name" value="PRK05354.1"/>
    <property type="match status" value="1"/>
</dbReference>
<dbReference type="NCBIfam" id="TIGR01273">
    <property type="entry name" value="speA"/>
    <property type="match status" value="1"/>
</dbReference>
<dbReference type="PANTHER" id="PTHR43295">
    <property type="entry name" value="ARGININE DECARBOXYLASE"/>
    <property type="match status" value="1"/>
</dbReference>
<dbReference type="PANTHER" id="PTHR43295:SF9">
    <property type="entry name" value="BIOSYNTHETIC ARGININE DECARBOXYLASE"/>
    <property type="match status" value="1"/>
</dbReference>
<dbReference type="Pfam" id="PF17810">
    <property type="entry name" value="Arg_decarb_HB"/>
    <property type="match status" value="1"/>
</dbReference>
<dbReference type="Pfam" id="PF17944">
    <property type="entry name" value="Arg_decarbox_C"/>
    <property type="match status" value="1"/>
</dbReference>
<dbReference type="Pfam" id="PF02784">
    <property type="entry name" value="Orn_Arg_deC_N"/>
    <property type="match status" value="1"/>
</dbReference>
<dbReference type="PIRSF" id="PIRSF001336">
    <property type="entry name" value="Arg_decrbxlase"/>
    <property type="match status" value="1"/>
</dbReference>
<dbReference type="PRINTS" id="PR01180">
    <property type="entry name" value="ARGDCRBXLASE"/>
</dbReference>
<dbReference type="PRINTS" id="PR01179">
    <property type="entry name" value="ODADCRBXLASE"/>
</dbReference>
<dbReference type="SUPFAM" id="SSF50621">
    <property type="entry name" value="Alanine racemase C-terminal domain-like"/>
    <property type="match status" value="1"/>
</dbReference>
<dbReference type="SUPFAM" id="SSF51419">
    <property type="entry name" value="PLP-binding barrel"/>
    <property type="match status" value="1"/>
</dbReference>
<dbReference type="PROSITE" id="PS00879">
    <property type="entry name" value="ODR_DC_2_2"/>
    <property type="match status" value="1"/>
</dbReference>
<organism>
    <name type="scientific">Xylella fastidiosa (strain M12)</name>
    <dbReference type="NCBI Taxonomy" id="405440"/>
    <lineage>
        <taxon>Bacteria</taxon>
        <taxon>Pseudomonadati</taxon>
        <taxon>Pseudomonadota</taxon>
        <taxon>Gammaproteobacteria</taxon>
        <taxon>Lysobacterales</taxon>
        <taxon>Lysobacteraceae</taxon>
        <taxon>Xylella</taxon>
    </lineage>
</organism>
<feature type="chain" id="PRO_1000145606" description="Biosynthetic arginine decarboxylase">
    <location>
        <begin position="1"/>
        <end position="628"/>
    </location>
</feature>
<feature type="binding site" evidence="1">
    <location>
        <begin position="279"/>
        <end position="289"/>
    </location>
    <ligand>
        <name>substrate</name>
    </ligand>
</feature>
<feature type="modified residue" description="N6-(pyridoxal phosphate)lysine" evidence="1">
    <location>
        <position position="99"/>
    </location>
</feature>
<gene>
    <name evidence="1" type="primary">speA</name>
    <name type="ordered locus">Xfasm12_0121</name>
</gene>
<evidence type="ECO:0000255" key="1">
    <source>
        <dbReference type="HAMAP-Rule" id="MF_01417"/>
    </source>
</evidence>
<sequence>MTWSQDLAHKTYSIRHWADGYFEVNDAGHMVVMPLGGDGVRISLPEVVDAARAAGAKLPLLLRFPDILRHRLGKLQAAFVQAQSEWEYAGGYTAVYPIKVNQHRGVAGVLASHQGDGFGLEAGSKPELMAVLALSRQGGLIVCNGYKDREYIRLALIGRKLGLKTFIVIEKPSELRMVLEEAKTLGVLPGLGVRVRLASLGAGKWQNSGGDKAKFGLSPRQVLDVWKVLRGTEYADCLNVMHFHMGSQISNVRDIAKGMREATRYFVELSRLGAKITHVDVGGGLGIDYEGTRSRSDCSINYGLQAYASHIVQPLASACEDYDLVPPRIVTECGRAMTAHHAVLIANVTEVEAVPEGRVPGLCDDEPAVVRHMREIYGELDARPAIELFYEAQHFHAEGLAAYTLGQIDLVHRARIDDLFYAISHGVRERLSHEEKSHRPVLDELNERLVDKYFVNFSVFESIPDVWAINQIFPIVPIERLNEAPTRRGVVCDLTCDSDGTVKQYVENESLDSALPLHVLRHGEAYRIGFFLVGAYQEILGDIHNLFGDTDAVEVAVDGRGYRIAQQRCGDTTDVMLDYVGYALDEVRRVYAQRITAAGMSAAESKALSDMLEAGLTGYPYLSDVPLE</sequence>
<comment type="function">
    <text evidence="1">Catalyzes the biosynthesis of agmatine from arginine.</text>
</comment>
<comment type="catalytic activity">
    <reaction evidence="1">
        <text>L-arginine + H(+) = agmatine + CO2</text>
        <dbReference type="Rhea" id="RHEA:17641"/>
        <dbReference type="ChEBI" id="CHEBI:15378"/>
        <dbReference type="ChEBI" id="CHEBI:16526"/>
        <dbReference type="ChEBI" id="CHEBI:32682"/>
        <dbReference type="ChEBI" id="CHEBI:58145"/>
        <dbReference type="EC" id="4.1.1.19"/>
    </reaction>
</comment>
<comment type="cofactor">
    <cofactor evidence="1">
        <name>Mg(2+)</name>
        <dbReference type="ChEBI" id="CHEBI:18420"/>
    </cofactor>
</comment>
<comment type="cofactor">
    <cofactor evidence="1">
        <name>pyridoxal 5'-phosphate</name>
        <dbReference type="ChEBI" id="CHEBI:597326"/>
    </cofactor>
</comment>
<comment type="pathway">
    <text evidence="1">Amine and polyamine biosynthesis; agmatine biosynthesis; agmatine from L-arginine: step 1/1.</text>
</comment>
<comment type="similarity">
    <text evidence="1">Belongs to the Orn/Lys/Arg decarboxylase class-II family. SpeA subfamily.</text>
</comment>
<reference key="1">
    <citation type="journal article" date="2010" name="J. Bacteriol.">
        <title>Whole genome sequences of two Xylella fastidiosa strains (M12 and M23) causing almond leaf scorch disease in California.</title>
        <authorList>
            <person name="Chen J."/>
            <person name="Xie G."/>
            <person name="Han S."/>
            <person name="Chertkov O."/>
            <person name="Sims D."/>
            <person name="Civerolo E.L."/>
        </authorList>
    </citation>
    <scope>NUCLEOTIDE SEQUENCE [LARGE SCALE GENOMIC DNA]</scope>
    <source>
        <strain>M12</strain>
    </source>
</reference>
<protein>
    <recommendedName>
        <fullName evidence="1">Biosynthetic arginine decarboxylase</fullName>
        <shortName evidence="1">ADC</shortName>
        <ecNumber evidence="1">4.1.1.19</ecNumber>
    </recommendedName>
</protein>
<name>SPEA_XYLFM</name>